<gene>
    <name evidence="1" type="primary">ribH</name>
    <name type="ordered locus">CKR_1901</name>
</gene>
<keyword id="KW-0686">Riboflavin biosynthesis</keyword>
<keyword id="KW-0808">Transferase</keyword>
<organism>
    <name type="scientific">Clostridium kluyveri (strain NBRC 12016)</name>
    <dbReference type="NCBI Taxonomy" id="583346"/>
    <lineage>
        <taxon>Bacteria</taxon>
        <taxon>Bacillati</taxon>
        <taxon>Bacillota</taxon>
        <taxon>Clostridia</taxon>
        <taxon>Eubacteriales</taxon>
        <taxon>Clostridiaceae</taxon>
        <taxon>Clostridium</taxon>
    </lineage>
</organism>
<proteinExistence type="inferred from homology"/>
<reference key="1">
    <citation type="submission" date="2005-09" db="EMBL/GenBank/DDBJ databases">
        <title>Complete genome sequence of Clostridium kluyveri and comparative genomics of Clostridia species.</title>
        <authorList>
            <person name="Inui M."/>
            <person name="Nonaka H."/>
            <person name="Shinoda Y."/>
            <person name="Ikenaga Y."/>
            <person name="Abe M."/>
            <person name="Naito K."/>
            <person name="Vertes A.A."/>
            <person name="Yukawa H."/>
        </authorList>
    </citation>
    <scope>NUCLEOTIDE SEQUENCE [LARGE SCALE GENOMIC DNA]</scope>
    <source>
        <strain>NBRC 12016</strain>
    </source>
</reference>
<comment type="function">
    <text evidence="1">Catalyzes the formation of 6,7-dimethyl-8-ribityllumazine by condensation of 5-amino-6-(D-ribitylamino)uracil with 3,4-dihydroxy-2-butanone 4-phosphate. This is the penultimate step in the biosynthesis of riboflavin.</text>
</comment>
<comment type="catalytic activity">
    <reaction evidence="1">
        <text>(2S)-2-hydroxy-3-oxobutyl phosphate + 5-amino-6-(D-ribitylamino)uracil = 6,7-dimethyl-8-(1-D-ribityl)lumazine + phosphate + 2 H2O + H(+)</text>
        <dbReference type="Rhea" id="RHEA:26152"/>
        <dbReference type="ChEBI" id="CHEBI:15377"/>
        <dbReference type="ChEBI" id="CHEBI:15378"/>
        <dbReference type="ChEBI" id="CHEBI:15934"/>
        <dbReference type="ChEBI" id="CHEBI:43474"/>
        <dbReference type="ChEBI" id="CHEBI:58201"/>
        <dbReference type="ChEBI" id="CHEBI:58830"/>
        <dbReference type="EC" id="2.5.1.78"/>
    </reaction>
</comment>
<comment type="pathway">
    <text evidence="1">Cofactor biosynthesis; riboflavin biosynthesis; riboflavin from 2-hydroxy-3-oxobutyl phosphate and 5-amino-6-(D-ribitylamino)uracil: step 1/2.</text>
</comment>
<comment type="similarity">
    <text evidence="1">Belongs to the DMRL synthase family.</text>
</comment>
<accession>B9E377</accession>
<protein>
    <recommendedName>
        <fullName evidence="1">6,7-dimethyl-8-ribityllumazine synthase</fullName>
        <shortName evidence="1">DMRL synthase</shortName>
        <shortName evidence="1">LS</shortName>
        <shortName evidence="1">Lumazine synthase</shortName>
        <ecNumber evidence="1">2.5.1.78</ecNumber>
    </recommendedName>
</protein>
<dbReference type="EC" id="2.5.1.78" evidence="1"/>
<dbReference type="EMBL" id="AP009049">
    <property type="protein sequence ID" value="BAH06952.1"/>
    <property type="molecule type" value="Genomic_DNA"/>
</dbReference>
<dbReference type="RefSeq" id="WP_012102505.1">
    <property type="nucleotide sequence ID" value="NC_011837.1"/>
</dbReference>
<dbReference type="SMR" id="B9E377"/>
<dbReference type="KEGG" id="ckr:CKR_1901"/>
<dbReference type="HOGENOM" id="CLU_089358_1_1_9"/>
<dbReference type="UniPathway" id="UPA00275">
    <property type="reaction ID" value="UER00404"/>
</dbReference>
<dbReference type="Proteomes" id="UP000007969">
    <property type="component" value="Chromosome"/>
</dbReference>
<dbReference type="GO" id="GO:0005829">
    <property type="term" value="C:cytosol"/>
    <property type="evidence" value="ECO:0007669"/>
    <property type="project" value="TreeGrafter"/>
</dbReference>
<dbReference type="GO" id="GO:0009349">
    <property type="term" value="C:riboflavin synthase complex"/>
    <property type="evidence" value="ECO:0007669"/>
    <property type="project" value="InterPro"/>
</dbReference>
<dbReference type="GO" id="GO:0000906">
    <property type="term" value="F:6,7-dimethyl-8-ribityllumazine synthase activity"/>
    <property type="evidence" value="ECO:0007669"/>
    <property type="project" value="UniProtKB-UniRule"/>
</dbReference>
<dbReference type="GO" id="GO:0009231">
    <property type="term" value="P:riboflavin biosynthetic process"/>
    <property type="evidence" value="ECO:0007669"/>
    <property type="project" value="UniProtKB-UniRule"/>
</dbReference>
<dbReference type="CDD" id="cd09209">
    <property type="entry name" value="Lumazine_synthase-I"/>
    <property type="match status" value="1"/>
</dbReference>
<dbReference type="FunFam" id="3.40.50.960:FF:000001">
    <property type="entry name" value="6,7-dimethyl-8-ribityllumazine synthase"/>
    <property type="match status" value="1"/>
</dbReference>
<dbReference type="Gene3D" id="3.40.50.960">
    <property type="entry name" value="Lumazine/riboflavin synthase"/>
    <property type="match status" value="1"/>
</dbReference>
<dbReference type="HAMAP" id="MF_00178">
    <property type="entry name" value="Lumazine_synth"/>
    <property type="match status" value="1"/>
</dbReference>
<dbReference type="InterPro" id="IPR034964">
    <property type="entry name" value="LS"/>
</dbReference>
<dbReference type="InterPro" id="IPR002180">
    <property type="entry name" value="LS/RS"/>
</dbReference>
<dbReference type="InterPro" id="IPR036467">
    <property type="entry name" value="LS/RS_sf"/>
</dbReference>
<dbReference type="NCBIfam" id="TIGR00114">
    <property type="entry name" value="lumazine-synth"/>
    <property type="match status" value="1"/>
</dbReference>
<dbReference type="NCBIfam" id="NF000812">
    <property type="entry name" value="PRK00061.1-4"/>
    <property type="match status" value="1"/>
</dbReference>
<dbReference type="PANTHER" id="PTHR21058:SF0">
    <property type="entry name" value="6,7-DIMETHYL-8-RIBITYLLUMAZINE SYNTHASE"/>
    <property type="match status" value="1"/>
</dbReference>
<dbReference type="PANTHER" id="PTHR21058">
    <property type="entry name" value="6,7-DIMETHYL-8-RIBITYLLUMAZINE SYNTHASE DMRL SYNTHASE LUMAZINE SYNTHASE"/>
    <property type="match status" value="1"/>
</dbReference>
<dbReference type="Pfam" id="PF00885">
    <property type="entry name" value="DMRL_synthase"/>
    <property type="match status" value="1"/>
</dbReference>
<dbReference type="SUPFAM" id="SSF52121">
    <property type="entry name" value="Lumazine synthase"/>
    <property type="match status" value="1"/>
</dbReference>
<evidence type="ECO:0000255" key="1">
    <source>
        <dbReference type="HAMAP-Rule" id="MF_00178"/>
    </source>
</evidence>
<feature type="chain" id="PRO_1000195472" description="6,7-dimethyl-8-ribityllumazine synthase">
    <location>
        <begin position="1"/>
        <end position="154"/>
    </location>
</feature>
<feature type="active site" description="Proton donor" evidence="1">
    <location>
        <position position="88"/>
    </location>
</feature>
<feature type="binding site" evidence="1">
    <location>
        <position position="22"/>
    </location>
    <ligand>
        <name>5-amino-6-(D-ribitylamino)uracil</name>
        <dbReference type="ChEBI" id="CHEBI:15934"/>
    </ligand>
</feature>
<feature type="binding site" evidence="1">
    <location>
        <begin position="56"/>
        <end position="58"/>
    </location>
    <ligand>
        <name>5-amino-6-(D-ribitylamino)uracil</name>
        <dbReference type="ChEBI" id="CHEBI:15934"/>
    </ligand>
</feature>
<feature type="binding site" evidence="1">
    <location>
        <begin position="80"/>
        <end position="82"/>
    </location>
    <ligand>
        <name>5-amino-6-(D-ribitylamino)uracil</name>
        <dbReference type="ChEBI" id="CHEBI:15934"/>
    </ligand>
</feature>
<feature type="binding site" evidence="1">
    <location>
        <begin position="85"/>
        <end position="86"/>
    </location>
    <ligand>
        <name>(2S)-2-hydroxy-3-oxobutyl phosphate</name>
        <dbReference type="ChEBI" id="CHEBI:58830"/>
    </ligand>
</feature>
<feature type="binding site" evidence="1">
    <location>
        <position position="113"/>
    </location>
    <ligand>
        <name>5-amino-6-(D-ribitylamino)uracil</name>
        <dbReference type="ChEBI" id="CHEBI:15934"/>
    </ligand>
</feature>
<feature type="binding site" evidence="1">
    <location>
        <position position="127"/>
    </location>
    <ligand>
        <name>(2S)-2-hydroxy-3-oxobutyl phosphate</name>
        <dbReference type="ChEBI" id="CHEBI:58830"/>
    </ligand>
</feature>
<name>RISB_CLOK1</name>
<sequence>MKVYEGKLNAEGLKFGIVVGRFNEFIVSKLLSGALDCLKRHGAEEDNIDITWVPGAFEIPMISKKMAFSRKYDAVICLGAVIRGSTPHFDYVSSEVSKGVAHVSLESDIPVIFSVLTTDNIEQAIERAGTKSGNKGYDGAMAAIEMANLIRELE</sequence>